<organism>
    <name type="scientific">Lactococcus lactis subsp. lactis (strain IL1403)</name>
    <name type="common">Streptococcus lactis</name>
    <dbReference type="NCBI Taxonomy" id="272623"/>
    <lineage>
        <taxon>Bacteria</taxon>
        <taxon>Bacillati</taxon>
        <taxon>Bacillota</taxon>
        <taxon>Bacilli</taxon>
        <taxon>Lactobacillales</taxon>
        <taxon>Streptococcaceae</taxon>
        <taxon>Lactococcus</taxon>
    </lineage>
</organism>
<accession>Q9CI19</accession>
<feature type="chain" id="PRO_0000216677" description="UPF0223 protein YfdD">
    <location>
        <begin position="1"/>
        <end position="93"/>
    </location>
</feature>
<name>YFDD_LACLA</name>
<gene>
    <name type="primary">yfdD</name>
    <name type="ordered locus">LL0547</name>
    <name type="ORF">L133111</name>
</gene>
<comment type="similarity">
    <text evidence="1">Belongs to the UPF0223 family.</text>
</comment>
<sequence>MKENYNYPLDLSWSTTEMTEVLSFFNQVEKFYESKVEKEVFLESYNAFKKIVPSKMQEKQLGRDFELSSGYSLYHAVKEVKASGKRFVSADKA</sequence>
<evidence type="ECO:0000305" key="1"/>
<reference key="1">
    <citation type="journal article" date="2001" name="Genome Res.">
        <title>The complete genome sequence of the lactic acid bacterium Lactococcus lactis ssp. lactis IL1403.</title>
        <authorList>
            <person name="Bolotin A."/>
            <person name="Wincker P."/>
            <person name="Mauger S."/>
            <person name="Jaillon O."/>
            <person name="Malarme K."/>
            <person name="Weissenbach J."/>
            <person name="Ehrlich S.D."/>
            <person name="Sorokin A."/>
        </authorList>
    </citation>
    <scope>NUCLEOTIDE SEQUENCE [LARGE SCALE GENOMIC DNA]</scope>
    <source>
        <strain>IL1403</strain>
    </source>
</reference>
<protein>
    <recommendedName>
        <fullName>UPF0223 protein YfdD</fullName>
    </recommendedName>
</protein>
<keyword id="KW-1185">Reference proteome</keyword>
<proteinExistence type="inferred from homology"/>
<dbReference type="EMBL" id="AE005176">
    <property type="protein sequence ID" value="AAK04645.1"/>
    <property type="molecule type" value="Genomic_DNA"/>
</dbReference>
<dbReference type="PIR" id="C86693">
    <property type="entry name" value="C86693"/>
</dbReference>
<dbReference type="RefSeq" id="NP_266703.1">
    <property type="nucleotide sequence ID" value="NC_002662.1"/>
</dbReference>
<dbReference type="RefSeq" id="WP_003131743.1">
    <property type="nucleotide sequence ID" value="NC_002662.1"/>
</dbReference>
<dbReference type="SMR" id="Q9CI19"/>
<dbReference type="PaxDb" id="272623-L133111"/>
<dbReference type="EnsemblBacteria" id="AAK04645">
    <property type="protein sequence ID" value="AAK04645"/>
    <property type="gene ID" value="L133111"/>
</dbReference>
<dbReference type="KEGG" id="lla:L133111"/>
<dbReference type="PATRIC" id="fig|272623.7.peg.585"/>
<dbReference type="eggNOG" id="COG4476">
    <property type="taxonomic scope" value="Bacteria"/>
</dbReference>
<dbReference type="HOGENOM" id="CLU_166693_0_0_9"/>
<dbReference type="OrthoDB" id="1649074at2"/>
<dbReference type="Proteomes" id="UP000002196">
    <property type="component" value="Chromosome"/>
</dbReference>
<dbReference type="Gene3D" id="1.10.220.80">
    <property type="entry name" value="BH2638-like"/>
    <property type="match status" value="1"/>
</dbReference>
<dbReference type="HAMAP" id="MF_01041">
    <property type="entry name" value="UPF0223"/>
    <property type="match status" value="1"/>
</dbReference>
<dbReference type="InterPro" id="IPR023324">
    <property type="entry name" value="BH2638-like_sf"/>
</dbReference>
<dbReference type="InterPro" id="IPR007920">
    <property type="entry name" value="UPF0223"/>
</dbReference>
<dbReference type="NCBIfam" id="NF003353">
    <property type="entry name" value="PRK04387.1"/>
    <property type="match status" value="1"/>
</dbReference>
<dbReference type="Pfam" id="PF05256">
    <property type="entry name" value="UPF0223"/>
    <property type="match status" value="1"/>
</dbReference>
<dbReference type="PIRSF" id="PIRSF037260">
    <property type="entry name" value="UPF0223"/>
    <property type="match status" value="1"/>
</dbReference>
<dbReference type="SUPFAM" id="SSF158504">
    <property type="entry name" value="BH2638-like"/>
    <property type="match status" value="1"/>
</dbReference>